<name>RNPH_PSEP7</name>
<reference key="1">
    <citation type="submission" date="2007-06" db="EMBL/GenBank/DDBJ databases">
        <authorList>
            <person name="Dodson R.J."/>
            <person name="Harkins D."/>
            <person name="Paulsen I.T."/>
        </authorList>
    </citation>
    <scope>NUCLEOTIDE SEQUENCE [LARGE SCALE GENOMIC DNA]</scope>
    <source>
        <strain>DSM 24068 / PA7</strain>
    </source>
</reference>
<proteinExistence type="inferred from homology"/>
<accession>A6VEE1</accession>
<evidence type="ECO:0000255" key="1">
    <source>
        <dbReference type="HAMAP-Rule" id="MF_00564"/>
    </source>
</evidence>
<comment type="function">
    <text evidence="1">Phosphorolytic 3'-5' exoribonuclease that plays an important role in tRNA 3'-end maturation. Removes nucleotide residues following the 3'-CCA terminus of tRNAs; can also add nucleotides to the ends of RNA molecules by using nucleoside diphosphates as substrates, but this may not be physiologically important. Probably plays a role in initiation of 16S rRNA degradation (leading to ribosome degradation) during starvation.</text>
</comment>
<comment type="catalytic activity">
    <reaction evidence="1">
        <text>tRNA(n+1) + phosphate = tRNA(n) + a ribonucleoside 5'-diphosphate</text>
        <dbReference type="Rhea" id="RHEA:10628"/>
        <dbReference type="Rhea" id="RHEA-COMP:17343"/>
        <dbReference type="Rhea" id="RHEA-COMP:17344"/>
        <dbReference type="ChEBI" id="CHEBI:43474"/>
        <dbReference type="ChEBI" id="CHEBI:57930"/>
        <dbReference type="ChEBI" id="CHEBI:173114"/>
        <dbReference type="EC" id="2.7.7.56"/>
    </reaction>
</comment>
<comment type="subunit">
    <text evidence="1">Homohexameric ring arranged as a trimer of dimers.</text>
</comment>
<comment type="similarity">
    <text evidence="1">Belongs to the RNase PH family.</text>
</comment>
<gene>
    <name evidence="1" type="primary">rph</name>
    <name type="ordered locus">PSPA7_6110</name>
</gene>
<organism>
    <name type="scientific">Pseudomonas paraeruginosa (strain DSM 24068 / PA7)</name>
    <name type="common">Pseudomonas aeruginosa (strain PA7)</name>
    <dbReference type="NCBI Taxonomy" id="381754"/>
    <lineage>
        <taxon>Bacteria</taxon>
        <taxon>Pseudomonadati</taxon>
        <taxon>Pseudomonadota</taxon>
        <taxon>Gammaproteobacteria</taxon>
        <taxon>Pseudomonadales</taxon>
        <taxon>Pseudomonadaceae</taxon>
        <taxon>Pseudomonas</taxon>
        <taxon>Pseudomonas paraeruginosa</taxon>
    </lineage>
</organism>
<protein>
    <recommendedName>
        <fullName evidence="1">Ribonuclease PH</fullName>
        <shortName evidence="1">RNase PH</shortName>
        <ecNumber evidence="1">2.7.7.56</ecNumber>
    </recommendedName>
    <alternativeName>
        <fullName evidence="1">tRNA nucleotidyltransferase</fullName>
    </alternativeName>
</protein>
<dbReference type="EC" id="2.7.7.56" evidence="1"/>
<dbReference type="EMBL" id="CP000744">
    <property type="protein sequence ID" value="ABR81934.1"/>
    <property type="molecule type" value="Genomic_DNA"/>
</dbReference>
<dbReference type="RefSeq" id="WP_012077942.1">
    <property type="nucleotide sequence ID" value="NC_009656.1"/>
</dbReference>
<dbReference type="SMR" id="A6VEE1"/>
<dbReference type="KEGG" id="pap:PSPA7_6110"/>
<dbReference type="HOGENOM" id="CLU_050858_0_0_6"/>
<dbReference type="Proteomes" id="UP000001582">
    <property type="component" value="Chromosome"/>
</dbReference>
<dbReference type="GO" id="GO:0000175">
    <property type="term" value="F:3'-5'-RNA exonuclease activity"/>
    <property type="evidence" value="ECO:0007669"/>
    <property type="project" value="UniProtKB-UniRule"/>
</dbReference>
<dbReference type="GO" id="GO:0000049">
    <property type="term" value="F:tRNA binding"/>
    <property type="evidence" value="ECO:0007669"/>
    <property type="project" value="UniProtKB-UniRule"/>
</dbReference>
<dbReference type="GO" id="GO:0009022">
    <property type="term" value="F:tRNA nucleotidyltransferase activity"/>
    <property type="evidence" value="ECO:0007669"/>
    <property type="project" value="UniProtKB-UniRule"/>
</dbReference>
<dbReference type="GO" id="GO:0016075">
    <property type="term" value="P:rRNA catabolic process"/>
    <property type="evidence" value="ECO:0007669"/>
    <property type="project" value="UniProtKB-UniRule"/>
</dbReference>
<dbReference type="GO" id="GO:0006364">
    <property type="term" value="P:rRNA processing"/>
    <property type="evidence" value="ECO:0007669"/>
    <property type="project" value="UniProtKB-KW"/>
</dbReference>
<dbReference type="GO" id="GO:0008033">
    <property type="term" value="P:tRNA processing"/>
    <property type="evidence" value="ECO:0007669"/>
    <property type="project" value="UniProtKB-UniRule"/>
</dbReference>
<dbReference type="CDD" id="cd11362">
    <property type="entry name" value="RNase_PH_bact"/>
    <property type="match status" value="1"/>
</dbReference>
<dbReference type="FunFam" id="3.30.230.70:FF:000003">
    <property type="entry name" value="Ribonuclease PH"/>
    <property type="match status" value="1"/>
</dbReference>
<dbReference type="Gene3D" id="3.30.230.70">
    <property type="entry name" value="GHMP Kinase, N-terminal domain"/>
    <property type="match status" value="1"/>
</dbReference>
<dbReference type="HAMAP" id="MF_00564">
    <property type="entry name" value="RNase_PH"/>
    <property type="match status" value="1"/>
</dbReference>
<dbReference type="InterPro" id="IPR001247">
    <property type="entry name" value="ExoRNase_PH_dom1"/>
</dbReference>
<dbReference type="InterPro" id="IPR015847">
    <property type="entry name" value="ExoRNase_PH_dom2"/>
</dbReference>
<dbReference type="InterPro" id="IPR036345">
    <property type="entry name" value="ExoRNase_PH_dom2_sf"/>
</dbReference>
<dbReference type="InterPro" id="IPR027408">
    <property type="entry name" value="PNPase/RNase_PH_dom_sf"/>
</dbReference>
<dbReference type="InterPro" id="IPR020568">
    <property type="entry name" value="Ribosomal_Su5_D2-typ_SF"/>
</dbReference>
<dbReference type="InterPro" id="IPR050080">
    <property type="entry name" value="RNase_PH"/>
</dbReference>
<dbReference type="InterPro" id="IPR002381">
    <property type="entry name" value="RNase_PH_bac-type"/>
</dbReference>
<dbReference type="InterPro" id="IPR018336">
    <property type="entry name" value="RNase_PH_CS"/>
</dbReference>
<dbReference type="NCBIfam" id="TIGR01966">
    <property type="entry name" value="RNasePH"/>
    <property type="match status" value="1"/>
</dbReference>
<dbReference type="PANTHER" id="PTHR11953">
    <property type="entry name" value="EXOSOME COMPLEX COMPONENT"/>
    <property type="match status" value="1"/>
</dbReference>
<dbReference type="PANTHER" id="PTHR11953:SF0">
    <property type="entry name" value="EXOSOME COMPLEX COMPONENT RRP41"/>
    <property type="match status" value="1"/>
</dbReference>
<dbReference type="Pfam" id="PF01138">
    <property type="entry name" value="RNase_PH"/>
    <property type="match status" value="1"/>
</dbReference>
<dbReference type="Pfam" id="PF03725">
    <property type="entry name" value="RNase_PH_C"/>
    <property type="match status" value="1"/>
</dbReference>
<dbReference type="SUPFAM" id="SSF55666">
    <property type="entry name" value="Ribonuclease PH domain 2-like"/>
    <property type="match status" value="1"/>
</dbReference>
<dbReference type="SUPFAM" id="SSF54211">
    <property type="entry name" value="Ribosomal protein S5 domain 2-like"/>
    <property type="match status" value="1"/>
</dbReference>
<dbReference type="PROSITE" id="PS01277">
    <property type="entry name" value="RIBONUCLEASE_PH"/>
    <property type="match status" value="1"/>
</dbReference>
<feature type="chain" id="PRO_1000024847" description="Ribonuclease PH">
    <location>
        <begin position="1"/>
        <end position="239"/>
    </location>
</feature>
<feature type="binding site" evidence="1">
    <location>
        <position position="87"/>
    </location>
    <ligand>
        <name>phosphate</name>
        <dbReference type="ChEBI" id="CHEBI:43474"/>
        <note>substrate</note>
    </ligand>
</feature>
<feature type="binding site" evidence="1">
    <location>
        <begin position="125"/>
        <end position="127"/>
    </location>
    <ligand>
        <name>phosphate</name>
        <dbReference type="ChEBI" id="CHEBI:43474"/>
        <note>substrate</note>
    </ligand>
</feature>
<keyword id="KW-0548">Nucleotidyltransferase</keyword>
<keyword id="KW-0694">RNA-binding</keyword>
<keyword id="KW-0698">rRNA processing</keyword>
<keyword id="KW-0808">Transferase</keyword>
<keyword id="KW-0819">tRNA processing</keyword>
<keyword id="KW-0820">tRNA-binding</keyword>
<sequence length="239" mass="25670">MNRPSGRAADQLRPIRITRHYTKHAEGSVLVEFGDTKVICTVSAESGVPRFLKGQGQGWLTAEYGMLPRSTGERNQREASRGKQGGRTLEIQRLIGRSLRAALDLSKLGENTLYIDCDVIQADGGTRTASITGATVALIDALAVLKKRGALKGNPLKQMVAAVSVGIYQGVPVLDLDYLEDSAAETDLNVVMTDSGGFIEVQGTAEGAPFRPAELNAMLELAQQGMQELFELQRAALAE</sequence>